<comment type="function">
    <text evidence="2">Transcriptional coactivator that may regulate cell type-specific differentiation pathways.</text>
</comment>
<comment type="domain">
    <text evidence="1">In the N-terminus possesses a conserved OCA domain for bivalent binding to class II POU domain-containing transcription factors and to an octamer DNA motif (5'-ATGAAAT-3').</text>
</comment>
<comment type="similarity">
    <text evidence="5">Belongs to the POU2AF family.</text>
</comment>
<name>OCAT1_DANRE</name>
<proteinExistence type="evidence at transcript level"/>
<organism>
    <name type="scientific">Danio rerio</name>
    <name type="common">Zebrafish</name>
    <name type="synonym">Brachydanio rerio</name>
    <dbReference type="NCBI Taxonomy" id="7955"/>
    <lineage>
        <taxon>Eukaryota</taxon>
        <taxon>Metazoa</taxon>
        <taxon>Chordata</taxon>
        <taxon>Craniata</taxon>
        <taxon>Vertebrata</taxon>
        <taxon>Euteleostomi</taxon>
        <taxon>Actinopterygii</taxon>
        <taxon>Neopterygii</taxon>
        <taxon>Teleostei</taxon>
        <taxon>Ostariophysi</taxon>
        <taxon>Cypriniformes</taxon>
        <taxon>Danionidae</taxon>
        <taxon>Danioninae</taxon>
        <taxon>Danio</taxon>
    </lineage>
</organism>
<gene>
    <name type="primary">pou2af2</name>
    <name type="ORF">zgc:158412</name>
</gene>
<evidence type="ECO:0000250" key="1">
    <source>
        <dbReference type="UniProtKB" id="Q8IXP5"/>
    </source>
</evidence>
<evidence type="ECO:0000250" key="2">
    <source>
        <dbReference type="UniProtKB" id="Q9D8Q6"/>
    </source>
</evidence>
<evidence type="ECO:0000255" key="3">
    <source>
        <dbReference type="PROSITE-ProRule" id="PRU01347"/>
    </source>
</evidence>
<evidence type="ECO:0000256" key="4">
    <source>
        <dbReference type="SAM" id="MobiDB-lite"/>
    </source>
</evidence>
<evidence type="ECO:0000305" key="5"/>
<protein>
    <recommendedName>
        <fullName>POU class 2 homeobox associating-factor 2</fullName>
    </recommendedName>
    <alternativeName>
        <fullName>Protein OCA-T1</fullName>
    </alternativeName>
</protein>
<reference key="1">
    <citation type="submission" date="2006-11" db="EMBL/GenBank/DDBJ databases">
        <authorList>
            <consortium name="NIH - Zebrafish Gene Collection (ZGC) project"/>
        </authorList>
    </citation>
    <scope>NUCLEOTIDE SEQUENCE [LARGE SCALE MRNA]</scope>
    <source>
        <tissue>Kidney</tissue>
    </source>
</reference>
<accession>A0PJS5</accession>
<feature type="chain" id="PRO_0000359893" description="POU class 2 homeobox associating-factor 2">
    <location>
        <begin position="1"/>
        <end position="291"/>
    </location>
</feature>
<feature type="domain" description="OCA" evidence="3">
    <location>
        <begin position="7"/>
        <end position="29"/>
    </location>
</feature>
<feature type="region of interest" description="Disordered" evidence="4">
    <location>
        <begin position="176"/>
        <end position="219"/>
    </location>
</feature>
<feature type="compositionally biased region" description="Low complexity" evidence="4">
    <location>
        <begin position="200"/>
        <end position="211"/>
    </location>
</feature>
<sequence>METEYSKRVYQGVRVKHTVKDLLAEKRLRQTNTPRFSTSSSSSQPAFVPMPGSHVLPGYYSMRRSFLQDSELCHTVKQYSSDTYSSALGSKAFSYDHASTYPAFIDSYYTPDSYGDYRGPTSYTTSGGSLFPPSSLPTLLPTLSGESSSHLLLRDPWDQPSEDSVNQTEVLCPEAAAPVADSPSLAGPDSGSSSPYRLTSGRSGSSIPSSSQPYTLQPLEDVPYTAPSYTSASSYSCPPYMSTPGDLAVVKMTAVTSEEASGGVVSLSDTTSWAKDDGTGSWLSYETRRAF</sequence>
<keyword id="KW-0010">Activator</keyword>
<keyword id="KW-1185">Reference proteome</keyword>
<keyword id="KW-0804">Transcription</keyword>
<keyword id="KW-0805">Transcription regulation</keyword>
<dbReference type="EMBL" id="BC127593">
    <property type="protein sequence ID" value="AAI27594.1"/>
    <property type="molecule type" value="mRNA"/>
</dbReference>
<dbReference type="RefSeq" id="NP_001073494.1">
    <property type="nucleotide sequence ID" value="NM_001080025.1"/>
</dbReference>
<dbReference type="SMR" id="A0PJS5"/>
<dbReference type="FunCoup" id="A0PJS5">
    <property type="interactions" value="2"/>
</dbReference>
<dbReference type="PaxDb" id="7955-ENSDARP00000119025"/>
<dbReference type="GeneID" id="566090"/>
<dbReference type="KEGG" id="dre:566090"/>
<dbReference type="AGR" id="ZFIN:ZDB-GENE-061201-18"/>
<dbReference type="ZFIN" id="ZDB-GENE-061201-18">
    <property type="gene designation" value="zgc:158412"/>
</dbReference>
<dbReference type="eggNOG" id="ENOG502RC2Q">
    <property type="taxonomic scope" value="Eukaryota"/>
</dbReference>
<dbReference type="InParanoid" id="A0PJS5"/>
<dbReference type="OrthoDB" id="9892004at2759"/>
<dbReference type="PhylomeDB" id="A0PJS5"/>
<dbReference type="TreeFam" id="TF332345"/>
<dbReference type="PRO" id="PR:A0PJS5"/>
<dbReference type="Proteomes" id="UP000000437">
    <property type="component" value="Chromosome 5"/>
</dbReference>
<dbReference type="GO" id="GO:0005634">
    <property type="term" value="C:nucleus"/>
    <property type="evidence" value="ECO:0000250"/>
    <property type="project" value="UniProtKB"/>
</dbReference>
<dbReference type="GO" id="GO:0070974">
    <property type="term" value="F:POU domain binding"/>
    <property type="evidence" value="ECO:0007669"/>
    <property type="project" value="InterPro"/>
</dbReference>
<dbReference type="GO" id="GO:0043565">
    <property type="term" value="F:sequence-specific DNA binding"/>
    <property type="evidence" value="ECO:0000250"/>
    <property type="project" value="UniProtKB"/>
</dbReference>
<dbReference type="GO" id="GO:0003713">
    <property type="term" value="F:transcription coactivator activity"/>
    <property type="evidence" value="ECO:0000250"/>
    <property type="project" value="UniProtKB"/>
</dbReference>
<dbReference type="InterPro" id="IPR047571">
    <property type="entry name" value="OCA"/>
</dbReference>
<dbReference type="InterPro" id="IPR037655">
    <property type="entry name" value="POU2AF2"/>
</dbReference>
<dbReference type="PANTHER" id="PTHR28376:SF1">
    <property type="entry name" value="POU DOMAIN CLASS 2-ASSOCIATING FACTOR 2"/>
    <property type="match status" value="1"/>
</dbReference>
<dbReference type="PANTHER" id="PTHR28376">
    <property type="entry name" value="RGD1562914"/>
    <property type="match status" value="1"/>
</dbReference>
<dbReference type="Pfam" id="PF17721">
    <property type="entry name" value="POU2AF2"/>
    <property type="match status" value="1"/>
</dbReference>
<dbReference type="PROSITE" id="PS52003">
    <property type="entry name" value="OCA"/>
    <property type="match status" value="1"/>
</dbReference>